<reference key="1">
    <citation type="journal article" date="2007" name="DNA Res.">
        <title>Complete genomic structure of the bloom-forming toxic cyanobacterium Microcystis aeruginosa NIES-843.</title>
        <authorList>
            <person name="Kaneko T."/>
            <person name="Nakajima N."/>
            <person name="Okamoto S."/>
            <person name="Suzuki I."/>
            <person name="Tanabe Y."/>
            <person name="Tamaoki M."/>
            <person name="Nakamura Y."/>
            <person name="Kasai F."/>
            <person name="Watanabe A."/>
            <person name="Kawashima K."/>
            <person name="Kishida Y."/>
            <person name="Ono A."/>
            <person name="Shimizu Y."/>
            <person name="Takahashi C."/>
            <person name="Minami C."/>
            <person name="Fujishiro T."/>
            <person name="Kohara M."/>
            <person name="Katoh M."/>
            <person name="Nakazaki N."/>
            <person name="Nakayama S."/>
            <person name="Yamada M."/>
            <person name="Tabata S."/>
            <person name="Watanabe M.M."/>
        </authorList>
    </citation>
    <scope>NUCLEOTIDE SEQUENCE [LARGE SCALE GENOMIC DNA]</scope>
    <source>
        <strain>NIES-843 / IAM M-247</strain>
    </source>
</reference>
<gene>
    <name evidence="1" type="primary">rpoC2</name>
    <name type="ordered locus">MAE_54520</name>
</gene>
<dbReference type="EC" id="2.7.7.6" evidence="1"/>
<dbReference type="EMBL" id="AP009552">
    <property type="protein sequence ID" value="BAG05274.1"/>
    <property type="molecule type" value="Genomic_DNA"/>
</dbReference>
<dbReference type="RefSeq" id="WP_002796211.1">
    <property type="nucleotide sequence ID" value="NC_010296.1"/>
</dbReference>
<dbReference type="SMR" id="B0JGK8"/>
<dbReference type="STRING" id="449447.MAE_54520"/>
<dbReference type="PaxDb" id="449447-MAE_54520"/>
<dbReference type="EnsemblBacteria" id="BAG05274">
    <property type="protein sequence ID" value="BAG05274"/>
    <property type="gene ID" value="MAE_54520"/>
</dbReference>
<dbReference type="KEGG" id="mar:MAE_54520"/>
<dbReference type="eggNOG" id="COG0086">
    <property type="taxonomic scope" value="Bacteria"/>
</dbReference>
<dbReference type="HOGENOM" id="CLU_000524_1_0_3"/>
<dbReference type="BioCyc" id="MAER449447:MAE_RS23685-MONOMER"/>
<dbReference type="Proteomes" id="UP000001510">
    <property type="component" value="Chromosome"/>
</dbReference>
<dbReference type="GO" id="GO:0000428">
    <property type="term" value="C:DNA-directed RNA polymerase complex"/>
    <property type="evidence" value="ECO:0007669"/>
    <property type="project" value="UniProtKB-KW"/>
</dbReference>
<dbReference type="GO" id="GO:0003677">
    <property type="term" value="F:DNA binding"/>
    <property type="evidence" value="ECO:0007669"/>
    <property type="project" value="UniProtKB-UniRule"/>
</dbReference>
<dbReference type="GO" id="GO:0003899">
    <property type="term" value="F:DNA-directed RNA polymerase activity"/>
    <property type="evidence" value="ECO:0007669"/>
    <property type="project" value="UniProtKB-UniRule"/>
</dbReference>
<dbReference type="GO" id="GO:0016763">
    <property type="term" value="F:pentosyltransferase activity"/>
    <property type="evidence" value="ECO:0007669"/>
    <property type="project" value="InterPro"/>
</dbReference>
<dbReference type="GO" id="GO:0008270">
    <property type="term" value="F:zinc ion binding"/>
    <property type="evidence" value="ECO:0007669"/>
    <property type="project" value="UniProtKB-UniRule"/>
</dbReference>
<dbReference type="GO" id="GO:0006351">
    <property type="term" value="P:DNA-templated transcription"/>
    <property type="evidence" value="ECO:0007669"/>
    <property type="project" value="UniProtKB-UniRule"/>
</dbReference>
<dbReference type="GO" id="GO:0006213">
    <property type="term" value="P:pyrimidine nucleoside metabolic process"/>
    <property type="evidence" value="ECO:0007669"/>
    <property type="project" value="InterPro"/>
</dbReference>
<dbReference type="CDD" id="cd02655">
    <property type="entry name" value="RNAP_beta'_C"/>
    <property type="match status" value="1"/>
</dbReference>
<dbReference type="FunFam" id="1.10.150.390:FF:000002">
    <property type="entry name" value="DNA-directed RNA polymerase subunit beta"/>
    <property type="match status" value="1"/>
</dbReference>
<dbReference type="Gene3D" id="1.10.132.30">
    <property type="match status" value="1"/>
</dbReference>
<dbReference type="Gene3D" id="1.10.150.390">
    <property type="match status" value="1"/>
</dbReference>
<dbReference type="Gene3D" id="1.10.1790.20">
    <property type="match status" value="1"/>
</dbReference>
<dbReference type="Gene3D" id="2.40.50.100">
    <property type="match status" value="3"/>
</dbReference>
<dbReference type="Gene3D" id="1.10.274.100">
    <property type="entry name" value="RNA polymerase Rpb1, domain 3"/>
    <property type="match status" value="1"/>
</dbReference>
<dbReference type="HAMAP" id="MF_01324">
    <property type="entry name" value="RNApol_bact_RpoC2"/>
    <property type="match status" value="1"/>
</dbReference>
<dbReference type="InterPro" id="IPR012756">
    <property type="entry name" value="DNA-dir_RpoC2_beta_pp"/>
</dbReference>
<dbReference type="InterPro" id="IPR045867">
    <property type="entry name" value="DNA-dir_RpoC_beta_prime"/>
</dbReference>
<dbReference type="InterPro" id="IPR036566">
    <property type="entry name" value="PYNP-like_C_sf"/>
</dbReference>
<dbReference type="InterPro" id="IPR007066">
    <property type="entry name" value="RNA_pol_Rpb1_3"/>
</dbReference>
<dbReference type="InterPro" id="IPR042102">
    <property type="entry name" value="RNA_pol_Rpb1_3_sf"/>
</dbReference>
<dbReference type="InterPro" id="IPR007083">
    <property type="entry name" value="RNA_pol_Rpb1_4"/>
</dbReference>
<dbReference type="InterPro" id="IPR007081">
    <property type="entry name" value="RNA_pol_Rpb1_5"/>
</dbReference>
<dbReference type="InterPro" id="IPR038120">
    <property type="entry name" value="Rpb1_funnel_sf"/>
</dbReference>
<dbReference type="NCBIfam" id="NF002724">
    <property type="entry name" value="PRK02597.1"/>
    <property type="match status" value="1"/>
</dbReference>
<dbReference type="NCBIfam" id="TIGR02388">
    <property type="entry name" value="rpoC2_cyan"/>
    <property type="match status" value="1"/>
</dbReference>
<dbReference type="PANTHER" id="PTHR19376">
    <property type="entry name" value="DNA-DIRECTED RNA POLYMERASE"/>
    <property type="match status" value="1"/>
</dbReference>
<dbReference type="PANTHER" id="PTHR19376:SF68">
    <property type="entry name" value="DNA-DIRECTED RNA POLYMERASE SUBUNIT BETA"/>
    <property type="match status" value="1"/>
</dbReference>
<dbReference type="Pfam" id="PF04983">
    <property type="entry name" value="RNA_pol_Rpb1_3"/>
    <property type="match status" value="1"/>
</dbReference>
<dbReference type="Pfam" id="PF05000">
    <property type="entry name" value="RNA_pol_Rpb1_4"/>
    <property type="match status" value="1"/>
</dbReference>
<dbReference type="Pfam" id="PF04998">
    <property type="entry name" value="RNA_pol_Rpb1_5"/>
    <property type="match status" value="2"/>
</dbReference>
<dbReference type="SUPFAM" id="SSF64484">
    <property type="entry name" value="beta and beta-prime subunits of DNA dependent RNA-polymerase"/>
    <property type="match status" value="1"/>
</dbReference>
<dbReference type="SUPFAM" id="SSF54680">
    <property type="entry name" value="Pyrimidine nucleoside phosphorylase C-terminal domain"/>
    <property type="match status" value="1"/>
</dbReference>
<organism>
    <name type="scientific">Microcystis aeruginosa (strain NIES-843 / IAM M-2473)</name>
    <dbReference type="NCBI Taxonomy" id="449447"/>
    <lineage>
        <taxon>Bacteria</taxon>
        <taxon>Bacillati</taxon>
        <taxon>Cyanobacteriota</taxon>
        <taxon>Cyanophyceae</taxon>
        <taxon>Oscillatoriophycideae</taxon>
        <taxon>Chroococcales</taxon>
        <taxon>Microcystaceae</taxon>
        <taxon>Microcystis</taxon>
    </lineage>
</organism>
<keyword id="KW-0240">DNA-directed RNA polymerase</keyword>
<keyword id="KW-0479">Metal-binding</keyword>
<keyword id="KW-0548">Nucleotidyltransferase</keyword>
<keyword id="KW-0804">Transcription</keyword>
<keyword id="KW-0808">Transferase</keyword>
<keyword id="KW-0862">Zinc</keyword>
<sequence>MFYNQTVDKGKLKKLIAWAYQNYGSARCSQMADELKNLGFRFATKAGVSISVDDLTVPPAKRQMIESAEQEIRQTEQRYVRGEITEVERFQKVIDTWNSTSESLKDEVIRNFQVTDPLNSVYMMAFSGARGNMSQVRQLVGMRGLMANPQGEIIDLPIKTNFREGLTVTEYVISSYGARKGLVDTALRTADSGYLTRRLVDVSQDVIVREADCGTNRYVELTAMTDGDRVLIPLSDRLLGRSLAEDVVVNGEVIATRNQIIDDETAEKLGRLVDKIKVRSPLTCEAARSVCQTCYGWSLAHGHPVDMGEAVGIIAAQSIGEPGTQLTMRTFHTGGVFTGEVARQVRSPFEGTVRFLPGLSIRNVRTRHGDERDQVEAPGEIKLTPKDKTKETVTYSLTPGSLLFVTDGETVSEEQLLAEITSDKVQKSTEKATKDVTSDLAGEVLFSQLVPEEKTDRQGNTTRIAQRGGLLWILSGEVYNLPPGAEPVVSNGDQVQVGDVLAETKLVSTNGGLVRLAPNSREIDIVTASVSLDQAEVKVESSAGREQFIIHTGDGQSFLLKTTPGTKVQNHAIVAELIDDRYQTHTGGMIKYVDIEVAKGSRKQGYEITKGGTILWIPEETHEVNKDISLLQVEDGQYVEAGEEVVKDIFCNSSGVVEVIQKNDILREIIVKPGLLFMDLEPESSGIAQEQLIYPGTQLTPEVTIEELRQAEWVETNEGLGLLLRPVQEFTVQDQSTSPTQGSANQEGGRHIELRSVQRIFFKDGERVKSVEGCQLISTQLVLEISSEEPESVSHLTADIELEPIEDRDCQRLQLVILESLVLRRDSDNDPLGGNIQTRVLVQDGDEIPPGAVVARTEIQCKEAGEIRGIRKGSEAVRRLLIVSDRDEFILPLAVAPTVKARDLVIAEAEIAAGVLAPNSGQVLAVDKTATGYEIRLRKARPYRVSAGAILHIDEGDLVQRGDNLVLLVFERSKTGDIIQGLPRIEELLEARKPKEACVLARKPGVCQVEYQDSEIVDIKVVEDDGTISEYPLLGSQNPLVSDNQRIDVGQALTDGQANPHEILEVFFNYYVDSLGSYEAALKALEKTQMFLVDQVQSVYQSQGIDIADKHIEVIVRQMTSKVRIDDGGDTSMLPGELLELRQVETVNEAMSITGGAAAKYTPVLLGITKASLNTDSFISAASFQETTRVLTEAAIEGKSDWLRGLKENVIIGRLIPAGTGFNSHENTAGISDYTPPEEEYNYNNRSYYAPPGGLGLPPRPGFGDSSEDSDMILDDQTARAYAEGDVVDLEDDEMAFLSSRGSSRFSRQPISDRWSEADEEGEEDDFEEDYEEE</sequence>
<feature type="chain" id="PRO_0000353522" description="DNA-directed RNA polymerase subunit beta'">
    <location>
        <begin position="1"/>
        <end position="1334"/>
    </location>
</feature>
<feature type="region of interest" description="Disordered" evidence="2">
    <location>
        <begin position="1299"/>
        <end position="1334"/>
    </location>
</feature>
<feature type="compositionally biased region" description="Low complexity" evidence="2">
    <location>
        <begin position="1299"/>
        <end position="1308"/>
    </location>
</feature>
<feature type="compositionally biased region" description="Acidic residues" evidence="2">
    <location>
        <begin position="1318"/>
        <end position="1334"/>
    </location>
</feature>
<feature type="binding site" evidence="1">
    <location>
        <position position="213"/>
    </location>
    <ligand>
        <name>Zn(2+)</name>
        <dbReference type="ChEBI" id="CHEBI:29105"/>
    </ligand>
</feature>
<feature type="binding site" evidence="1">
    <location>
        <position position="284"/>
    </location>
    <ligand>
        <name>Zn(2+)</name>
        <dbReference type="ChEBI" id="CHEBI:29105"/>
    </ligand>
</feature>
<feature type="binding site" evidence="1">
    <location>
        <position position="291"/>
    </location>
    <ligand>
        <name>Zn(2+)</name>
        <dbReference type="ChEBI" id="CHEBI:29105"/>
    </ligand>
</feature>
<feature type="binding site" evidence="1">
    <location>
        <position position="294"/>
    </location>
    <ligand>
        <name>Zn(2+)</name>
        <dbReference type="ChEBI" id="CHEBI:29105"/>
    </ligand>
</feature>
<evidence type="ECO:0000255" key="1">
    <source>
        <dbReference type="HAMAP-Rule" id="MF_01324"/>
    </source>
</evidence>
<evidence type="ECO:0000256" key="2">
    <source>
        <dbReference type="SAM" id="MobiDB-lite"/>
    </source>
</evidence>
<protein>
    <recommendedName>
        <fullName evidence="1">DNA-directed RNA polymerase subunit beta'</fullName>
        <shortName evidence="1">RNAP subunit beta'</shortName>
        <ecNumber evidence="1">2.7.7.6</ecNumber>
    </recommendedName>
    <alternativeName>
        <fullName evidence="1">RNA polymerase subunit beta'</fullName>
    </alternativeName>
    <alternativeName>
        <fullName evidence="1">Transcriptase subunit beta'</fullName>
    </alternativeName>
</protein>
<comment type="function">
    <text evidence="1">DNA-dependent RNA polymerase catalyzes the transcription of DNA into RNA using the four ribonucleoside triphosphates as substrates.</text>
</comment>
<comment type="catalytic activity">
    <reaction evidence="1">
        <text>RNA(n) + a ribonucleoside 5'-triphosphate = RNA(n+1) + diphosphate</text>
        <dbReference type="Rhea" id="RHEA:21248"/>
        <dbReference type="Rhea" id="RHEA-COMP:14527"/>
        <dbReference type="Rhea" id="RHEA-COMP:17342"/>
        <dbReference type="ChEBI" id="CHEBI:33019"/>
        <dbReference type="ChEBI" id="CHEBI:61557"/>
        <dbReference type="ChEBI" id="CHEBI:140395"/>
        <dbReference type="EC" id="2.7.7.6"/>
    </reaction>
</comment>
<comment type="cofactor">
    <cofactor evidence="1">
        <name>Zn(2+)</name>
        <dbReference type="ChEBI" id="CHEBI:29105"/>
    </cofactor>
    <text evidence="1">Binds 1 Zn(2+) ion per subunit.</text>
</comment>
<comment type="subunit">
    <text evidence="1">In cyanobacteria the RNAP catalytic core is composed of 2 alpha, 1 beta, 1 beta', 1 gamma and 1 omega subunit. When a sigma factor is associated with the core the holoenzyme is formed, which can initiate transcription.</text>
</comment>
<comment type="similarity">
    <text evidence="1">Belongs to the RNA polymerase beta' chain family. RpoC2 subfamily.</text>
</comment>
<proteinExistence type="inferred from homology"/>
<name>RPOC2_MICAN</name>
<accession>B0JGK8</accession>